<feature type="signal peptide" evidence="1">
    <location>
        <begin position="1"/>
        <end position="27"/>
    </location>
</feature>
<feature type="chain" id="PRO_0000230995" description="GPI-anchor transamidase">
    <location>
        <begin position="28"/>
        <end position="395"/>
    </location>
</feature>
<feature type="topological domain" description="Lumenal" evidence="2">
    <location>
        <begin position="28"/>
        <end position="368"/>
    </location>
</feature>
<feature type="transmembrane region" description="Helical" evidence="1">
    <location>
        <begin position="369"/>
        <end position="385"/>
    </location>
</feature>
<feature type="topological domain" description="Cytoplasmic" evidence="2">
    <location>
        <begin position="386"/>
        <end position="395"/>
    </location>
</feature>
<feature type="region of interest" description="Autoinhibitory loop" evidence="1">
    <location>
        <begin position="231"/>
        <end position="236"/>
    </location>
</feature>
<feature type="active site" description="Proton donor" evidence="1">
    <location>
        <position position="164"/>
    </location>
</feature>
<feature type="active site" description="Nucleophile; acyl-thioester intermediate" evidence="1">
    <location>
        <position position="206"/>
    </location>
</feature>
<feature type="binding site" evidence="1">
    <location>
        <position position="79"/>
    </location>
    <ligand>
        <name>Ca(2+)</name>
        <dbReference type="ChEBI" id="CHEBI:29108"/>
    </ligand>
</feature>
<feature type="binding site" evidence="1">
    <location>
        <position position="82"/>
    </location>
    <ligand>
        <name>Ca(2+)</name>
        <dbReference type="ChEBI" id="CHEBI:29108"/>
    </ligand>
</feature>
<feature type="binding site" evidence="1">
    <location>
        <position position="118"/>
    </location>
    <ligand>
        <name>Ca(2+)</name>
        <dbReference type="ChEBI" id="CHEBI:29108"/>
    </ligand>
</feature>
<feature type="binding site" evidence="1">
    <location>
        <position position="120"/>
    </location>
    <ligand>
        <name>Ca(2+)</name>
        <dbReference type="ChEBI" id="CHEBI:29108"/>
    </ligand>
</feature>
<feature type="binding site" evidence="1">
    <location>
        <position position="206"/>
    </location>
    <ligand>
        <name>a protein</name>
        <dbReference type="ChEBI" id="CHEBI:16541"/>
    </ligand>
    <ligandPart>
        <name>GPI-anchor amidated serine</name>
    </ligandPart>
</feature>
<feature type="binding site" evidence="1">
    <location>
        <position position="232"/>
    </location>
    <ligand>
        <name>a protein</name>
        <dbReference type="ChEBI" id="CHEBI:16541"/>
    </ligand>
    <ligandPart>
        <name>GPI-anchor amidated serine</name>
    </ligandPart>
</feature>
<feature type="binding site" evidence="1">
    <location>
        <position position="234"/>
    </location>
    <ligand>
        <name>a protein</name>
        <dbReference type="ChEBI" id="CHEBI:16541"/>
    </ligand>
    <ligandPart>
        <name>L-serine residue</name>
        <dbReference type="ChEBI" id="CHEBI:29999"/>
    </ligandPart>
</feature>
<feature type="disulfide bond" description="Interchain (with C-182 in PIGT)" evidence="1">
    <location>
        <position position="92"/>
    </location>
</feature>
<feature type="disulfide bond" evidence="1">
    <location>
        <begin position="275"/>
        <end position="280"/>
    </location>
</feature>
<evidence type="ECO:0000250" key="1">
    <source>
        <dbReference type="UniProtKB" id="Q92643"/>
    </source>
</evidence>
<evidence type="ECO:0000255" key="2"/>
<evidence type="ECO:0000305" key="3"/>
<sequence>MVDTCFLSRGLTTLAGLLLLPFGSLAASQIEDQAEQFFRSGHTNNWAVLVCTSRFWFNYRHVANTLSVYRSVKRLGIPDSHIVLMLADDMACNPRNPKPATVYSHKNMELNVYGDDVEVDYRSYEVTVENFLRVLTGRIPSSTPRSKRLLSDDRSNILIYMTGHGGNGFLKFQDSEEITNIELADAFEQMWQKRRYNELLFIIDTCQGASMYERFYSPNIMALASSQVGEDSLSHQPDPAVGVHLMDRYTFYVLEFLEEINPASQTNMNDLFQVCPRSLCVSTPGHRTDLFQRDPKNVLITDFFGSVRKVEITTETISLQPDSGVVESSYKKDQMVEELMEPLKYAEQLPVAQIIHQKPKLKDWHPPGGFILGLWALIIMVFFKTYGIKHMKFIF</sequence>
<accession>Q3MHZ7</accession>
<name>GPI8_BOVIN</name>
<proteinExistence type="evidence at transcript level"/>
<comment type="function">
    <text evidence="1">Catalytic subunit of the glycosylphosphatidylinositol-anchor (GPI-anchor) transamidase (GPI-T) complex that catalyzes the formation of the linkage between a proprotein and a GPI-anchor and participates in GPI anchored protein biosynthesis. Recognizes diverse proproteins at a C-terminal signal peptide (CSP) region that lacks consensus sequence and replaces it with a GPI-anchor via a transamidation reaction. Transamidation catalysis reaction follows a two-phase mechanism. In the acyl-enzyme phase, the carbonyl group of the proproteins's omega-site undergoes a nucleophilic attack forming an enzyme-substrate thioester bond. Followed by a general acid catalysis that allows CSP releasing, regenerating the carbonyl, and forming the acyl-enzyme intermediate. In the GPI-anchor attachment phase, the amino group of the GPI-anchor's ethanolamine phosphate, the one on third mannose (EtNP3), mediates a nucleophilic attack on the carbonyl of the acyl-enzyme intermediate, replacing the CSP, allowing GPI-anchor attachment to the omega-residue, therefore forming the product and freeing the enzyme.</text>
</comment>
<comment type="activity regulation">
    <text evidence="1">In the absence of proproteins substrates, exists in an inactive state with a disrupted catalytic site by an autoinhibitory loop. The binding of proprotein substrates, particularly the CSP region, to GPI-T triggers concerted conformational changes that alleviate the inhibition by the autoinhibitory loop. Meanwhile, proprotein residues near the omega- site induce the formation of a catalytic cleft for catalysis, following which the products are released and GPI-T reverts to the inactive state.</text>
</comment>
<comment type="pathway">
    <text evidence="1">Glycolipid biosynthesis; glycosylphosphatidylinositol-anchor biosynthesis.</text>
</comment>
<comment type="subunit">
    <text evidence="1">Heteropentamer. Part of the GPI-anchor transamidase complex, consisting of PIGK, PIGT, PIGS, PIGU and GAA1. Interacts with GPAA1. Interacts with PIGT; this interaction, via a disulfide link, stabilizes the expression of GAA1 and PIGK and links them to PIGS.</text>
</comment>
<comment type="subcellular location">
    <subcellularLocation>
        <location evidence="1">Endoplasmic reticulum membrane</location>
        <topology evidence="1">Single-pass type I membrane protein</topology>
    </subcellularLocation>
</comment>
<comment type="PTM">
    <text evidence="1">The disulfide bond between PIGK/GPI8 and PIGT is important for normal enzyme activity.</text>
</comment>
<comment type="similarity">
    <text evidence="3">Belongs to the peptidase C13 family.</text>
</comment>
<dbReference type="EC" id="2.6.1.-" evidence="1"/>
<dbReference type="EMBL" id="BC104506">
    <property type="protein sequence ID" value="AAI04507.1"/>
    <property type="molecule type" value="mRNA"/>
</dbReference>
<dbReference type="RefSeq" id="NP_001071348.1">
    <property type="nucleotide sequence ID" value="NM_001077880.1"/>
</dbReference>
<dbReference type="SMR" id="Q3MHZ7"/>
<dbReference type="FunCoup" id="Q3MHZ7">
    <property type="interactions" value="2782"/>
</dbReference>
<dbReference type="STRING" id="9913.ENSBTAP00000041428"/>
<dbReference type="MEROPS" id="C13.005"/>
<dbReference type="PaxDb" id="9913-ENSBTAP00000041428"/>
<dbReference type="Ensembl" id="ENSBTAT00000114008.1">
    <property type="protein sequence ID" value="ENSBTAP00000087417.1"/>
    <property type="gene ID" value="ENSBTAG00000031012.5"/>
</dbReference>
<dbReference type="GeneID" id="508700"/>
<dbReference type="KEGG" id="bta:508700"/>
<dbReference type="CTD" id="10026"/>
<dbReference type="VEuPathDB" id="HostDB:ENSBTAG00000031012"/>
<dbReference type="VGNC" id="VGNC:32870">
    <property type="gene designation" value="PIGK"/>
</dbReference>
<dbReference type="eggNOG" id="KOG1349">
    <property type="taxonomic scope" value="Eukaryota"/>
</dbReference>
<dbReference type="GeneTree" id="ENSGT00940000156273"/>
<dbReference type="HOGENOM" id="CLU_044656_1_0_1"/>
<dbReference type="InParanoid" id="Q3MHZ7"/>
<dbReference type="OMA" id="VMESQFP"/>
<dbReference type="OrthoDB" id="192611at2759"/>
<dbReference type="TreeFam" id="TF300848"/>
<dbReference type="Reactome" id="R-BTA-162791">
    <property type="pathway name" value="Attachment of GPI anchor to uPAR"/>
</dbReference>
<dbReference type="UniPathway" id="UPA00196"/>
<dbReference type="Proteomes" id="UP000009136">
    <property type="component" value="Chromosome 3"/>
</dbReference>
<dbReference type="Bgee" id="ENSBTAG00000031012">
    <property type="expression patterns" value="Expressed in caput epididymis and 109 other cell types or tissues"/>
</dbReference>
<dbReference type="GO" id="GO:0042765">
    <property type="term" value="C:GPI-anchor transamidase complex"/>
    <property type="evidence" value="ECO:0000250"/>
    <property type="project" value="UniProtKB"/>
</dbReference>
<dbReference type="GO" id="GO:0003923">
    <property type="term" value="F:GPI-anchor transamidase activity"/>
    <property type="evidence" value="ECO:0000250"/>
    <property type="project" value="UniProtKB"/>
</dbReference>
<dbReference type="GO" id="GO:0016255">
    <property type="term" value="P:attachment of GPI anchor to protein"/>
    <property type="evidence" value="ECO:0000250"/>
    <property type="project" value="UniProtKB"/>
</dbReference>
<dbReference type="GO" id="GO:0006506">
    <property type="term" value="P:GPI anchor biosynthetic process"/>
    <property type="evidence" value="ECO:0007669"/>
    <property type="project" value="UniProtKB-UniPathway"/>
</dbReference>
<dbReference type="GO" id="GO:0006508">
    <property type="term" value="P:proteolysis"/>
    <property type="evidence" value="ECO:0007669"/>
    <property type="project" value="UniProtKB-KW"/>
</dbReference>
<dbReference type="FunFam" id="3.40.50.1460:FF:000002">
    <property type="entry name" value="GPI-anchor transamidase"/>
    <property type="match status" value="1"/>
</dbReference>
<dbReference type="Gene3D" id="3.40.50.1460">
    <property type="match status" value="1"/>
</dbReference>
<dbReference type="InterPro" id="IPR028361">
    <property type="entry name" value="GPI_transamidase"/>
</dbReference>
<dbReference type="InterPro" id="IPR001096">
    <property type="entry name" value="Peptidase_C13"/>
</dbReference>
<dbReference type="PANTHER" id="PTHR48067">
    <property type="entry name" value="GPI-ANCHOR TRANSAMIDASE"/>
    <property type="match status" value="1"/>
</dbReference>
<dbReference type="PANTHER" id="PTHR48067:SF1">
    <property type="entry name" value="GPI-ANCHOR TRANSAMIDASE"/>
    <property type="match status" value="1"/>
</dbReference>
<dbReference type="Pfam" id="PF01650">
    <property type="entry name" value="Peptidase_C13"/>
    <property type="match status" value="1"/>
</dbReference>
<dbReference type="PIRSF" id="PIRSF500138">
    <property type="entry name" value="GPI8"/>
    <property type="match status" value="1"/>
</dbReference>
<dbReference type="PIRSF" id="PIRSF019663">
    <property type="entry name" value="Legumain"/>
    <property type="match status" value="1"/>
</dbReference>
<dbReference type="PRINTS" id="PR00776">
    <property type="entry name" value="HEMOGLOBNASE"/>
</dbReference>
<gene>
    <name evidence="1" type="primary">PIGK</name>
</gene>
<reference key="1">
    <citation type="submission" date="2005-09" db="EMBL/GenBank/DDBJ databases">
        <authorList>
            <consortium name="NIH - Mammalian Gene Collection (MGC) project"/>
        </authorList>
    </citation>
    <scope>NUCLEOTIDE SEQUENCE [LARGE SCALE MRNA]</scope>
    <source>
        <strain>Hereford</strain>
        <tissue>Ascending colon</tissue>
    </source>
</reference>
<keyword id="KW-0106">Calcium</keyword>
<keyword id="KW-1015">Disulfide bond</keyword>
<keyword id="KW-0256">Endoplasmic reticulum</keyword>
<keyword id="KW-0337">GPI-anchor biosynthesis</keyword>
<keyword id="KW-0472">Membrane</keyword>
<keyword id="KW-0479">Metal-binding</keyword>
<keyword id="KW-1185">Reference proteome</keyword>
<keyword id="KW-0732">Signal</keyword>
<keyword id="KW-0808">Transferase</keyword>
<keyword id="KW-0812">Transmembrane</keyword>
<keyword id="KW-1133">Transmembrane helix</keyword>
<protein>
    <recommendedName>
        <fullName evidence="1">GPI-anchor transamidase</fullName>
        <ecNumber evidence="1">2.6.1.-</ecNumber>
    </recommendedName>
    <alternativeName>
        <fullName>GPI-anchor transamidase component PIGK</fullName>
    </alternativeName>
    <alternativeName>
        <fullName>Phosphatidylinositol-glycan biosynthesis class K protein</fullName>
        <shortName>PIG-K</shortName>
    </alternativeName>
</protein>
<organism>
    <name type="scientific">Bos taurus</name>
    <name type="common">Bovine</name>
    <dbReference type="NCBI Taxonomy" id="9913"/>
    <lineage>
        <taxon>Eukaryota</taxon>
        <taxon>Metazoa</taxon>
        <taxon>Chordata</taxon>
        <taxon>Craniata</taxon>
        <taxon>Vertebrata</taxon>
        <taxon>Euteleostomi</taxon>
        <taxon>Mammalia</taxon>
        <taxon>Eutheria</taxon>
        <taxon>Laurasiatheria</taxon>
        <taxon>Artiodactyla</taxon>
        <taxon>Ruminantia</taxon>
        <taxon>Pecora</taxon>
        <taxon>Bovidae</taxon>
        <taxon>Bovinae</taxon>
        <taxon>Bos</taxon>
    </lineage>
</organism>